<organism>
    <name type="scientific">Leptospira interrogans serogroup Icterohaemorrhagiae serovar copenhageni (strain Fiocruz L1-130)</name>
    <dbReference type="NCBI Taxonomy" id="267671"/>
    <lineage>
        <taxon>Bacteria</taxon>
        <taxon>Pseudomonadati</taxon>
        <taxon>Spirochaetota</taxon>
        <taxon>Spirochaetia</taxon>
        <taxon>Leptospirales</taxon>
        <taxon>Leptospiraceae</taxon>
        <taxon>Leptospira</taxon>
    </lineage>
</organism>
<protein>
    <recommendedName>
        <fullName evidence="1">2-oxoglutarate dehydrogenase E1 component</fullName>
        <ecNumber evidence="1">1.2.4.2</ecNumber>
    </recommendedName>
    <alternativeName>
        <fullName evidence="1">Alpha-ketoglutarate dehydrogenase</fullName>
    </alternativeName>
</protein>
<proteinExistence type="inferred from homology"/>
<reference key="1">
    <citation type="journal article" date="2004" name="J. Bacteriol.">
        <title>Comparative genomics of two Leptospira interrogans serovars reveals novel insights into physiology and pathogenesis.</title>
        <authorList>
            <person name="Nascimento A.L.T.O."/>
            <person name="Ko A.I."/>
            <person name="Martins E.A.L."/>
            <person name="Monteiro-Vitorello C.B."/>
            <person name="Ho P.L."/>
            <person name="Haake D.A."/>
            <person name="Verjovski-Almeida S."/>
            <person name="Hartskeerl R.A."/>
            <person name="Marques M.V."/>
            <person name="Oliveira M.C."/>
            <person name="Menck C.F.M."/>
            <person name="Leite L.C.C."/>
            <person name="Carrer H."/>
            <person name="Coutinho L.L."/>
            <person name="Degrave W.M."/>
            <person name="Dellagostin O.A."/>
            <person name="El-Dorry H."/>
            <person name="Ferro E.S."/>
            <person name="Ferro M.I.T."/>
            <person name="Furlan L.R."/>
            <person name="Gamberini M."/>
            <person name="Giglioti E.A."/>
            <person name="Goes-Neto A."/>
            <person name="Goldman G.H."/>
            <person name="Goldman M.H.S."/>
            <person name="Harakava R."/>
            <person name="Jeronimo S.M.B."/>
            <person name="Junqueira-de-Azevedo I.L.M."/>
            <person name="Kimura E.T."/>
            <person name="Kuramae E.E."/>
            <person name="Lemos E.G.M."/>
            <person name="Lemos M.V.F."/>
            <person name="Marino C.L."/>
            <person name="Nunes L.R."/>
            <person name="de Oliveira R.C."/>
            <person name="Pereira G.G."/>
            <person name="Reis M.S."/>
            <person name="Schriefer A."/>
            <person name="Siqueira W.J."/>
            <person name="Sommer P."/>
            <person name="Tsai S.M."/>
            <person name="Simpson A.J.G."/>
            <person name="Ferro J.A."/>
            <person name="Camargo L.E.A."/>
            <person name="Kitajima J.P."/>
            <person name="Setubal J.C."/>
            <person name="Van Sluys M.A."/>
        </authorList>
    </citation>
    <scope>NUCLEOTIDE SEQUENCE [LARGE SCALE GENOMIC DNA]</scope>
    <source>
        <strain>Fiocruz L1-130</strain>
    </source>
</reference>
<sequence length="920" mass="103922">MKIEKLMALYGENGALLEELYNQYKLNPETLDKEWKSFFQEVDTNGLANGSGYTNGNGKSAVATSFTDAQAASIREMGIINLLNAYRRQGHLAAKLDPLGIQKPNRTFIDSKLHNISPADIDTVVDSETLGRVKLAEIVDLYEKVYCNTIGAEHFYLVNDEEREWLQKKMESPEFLAPLPRGIKLRLFEKLFQADYFETFLAKKYVGKKRFSLEGGESFIPLLDTIVEEAGYHQMDGLVIGMAHRGRLNVLVNIIEKPASLIFAEFEEKTDKDNLSYADVKYHLGYSNSRMTTSGKEVKLSLAFNPSHLECVDPVVTGSVRARQTLIGDKDRSKYMPILIHGDAAFAGQGVVAETLNLMNLEGYTTGGTFHIVVNNQIGFTTLPDESRSTLYATDLAKGFQIPIIHVNGDDPEAVYRVVKLGMEYRQKFKKDFIIDLVCYRRLGHNETDEPAFTQPKMYAIIKNHPPTVKLYEKRLVEEGDIPQEDIDFIKNGSMHGLEDSFQRAKEQDVKIRVDTMQGVWSKFSKDSLDSEPATKLLAEQMHGIVQALTSVPQGFTPNSKLVKLLQSRKEMAEGKIPVDWGFAEALSFGSILESGFRIRLSGQDSQRGTFSHRHAVLVDTNTNEKYIPLNHISSKQAKAEIINSSLSEFSVLGFEYGYSLSDPNALVMWEAQFGDFANSAQVIFDQFISSSEVKWQRLSGLIMLLPHGYEGQGPEHSSARLERFLQLCALDNMQVCNLTTAAQYFHLLRRQMLRNYRKPLVIVTPKSLLRFPASLSPVEDILQGAFREILIDDSGSKPDKIEKVVFSAGKVYYDLMKYKDENKIKNVALVRVEQIYPFPAKEIQSSLKTFKNAKQFVWCQEEPKNQGAWFFVRERIEELLPGNARLVYAGRHESPSPAAGHMKLHLQEQDQLVLDAFQA</sequence>
<dbReference type="EC" id="1.2.4.2" evidence="1"/>
<dbReference type="EMBL" id="AE016823">
    <property type="protein sequence ID" value="AAS71039.1"/>
    <property type="molecule type" value="Genomic_DNA"/>
</dbReference>
<dbReference type="RefSeq" id="WP_000687652.1">
    <property type="nucleotide sequence ID" value="NC_005823.1"/>
</dbReference>
<dbReference type="SMR" id="Q72PJ7"/>
<dbReference type="KEGG" id="lic:LIC_12474"/>
<dbReference type="HOGENOM" id="CLU_004709_1_0_12"/>
<dbReference type="Proteomes" id="UP000007037">
    <property type="component" value="Chromosome I"/>
</dbReference>
<dbReference type="GO" id="GO:0005829">
    <property type="term" value="C:cytosol"/>
    <property type="evidence" value="ECO:0007669"/>
    <property type="project" value="TreeGrafter"/>
</dbReference>
<dbReference type="GO" id="GO:0045252">
    <property type="term" value="C:oxoglutarate dehydrogenase complex"/>
    <property type="evidence" value="ECO:0007669"/>
    <property type="project" value="TreeGrafter"/>
</dbReference>
<dbReference type="GO" id="GO:0004591">
    <property type="term" value="F:oxoglutarate dehydrogenase (succinyl-transferring) activity"/>
    <property type="evidence" value="ECO:0007669"/>
    <property type="project" value="UniProtKB-UniRule"/>
</dbReference>
<dbReference type="GO" id="GO:0030976">
    <property type="term" value="F:thiamine pyrophosphate binding"/>
    <property type="evidence" value="ECO:0007669"/>
    <property type="project" value="UniProtKB-UniRule"/>
</dbReference>
<dbReference type="GO" id="GO:0006096">
    <property type="term" value="P:glycolytic process"/>
    <property type="evidence" value="ECO:0007669"/>
    <property type="project" value="UniProtKB-UniRule"/>
</dbReference>
<dbReference type="GO" id="GO:0006099">
    <property type="term" value="P:tricarboxylic acid cycle"/>
    <property type="evidence" value="ECO:0007669"/>
    <property type="project" value="TreeGrafter"/>
</dbReference>
<dbReference type="CDD" id="cd02016">
    <property type="entry name" value="TPP_E1_OGDC_like"/>
    <property type="match status" value="1"/>
</dbReference>
<dbReference type="FunFam" id="3.40.50.12470:FF:000009">
    <property type="entry name" value="2-oxoglutarate dehydrogenase E1 component"/>
    <property type="match status" value="1"/>
</dbReference>
<dbReference type="FunFam" id="3.40.50.970:FF:000061">
    <property type="entry name" value="2-oxoglutarate dehydrogenase E1 component"/>
    <property type="match status" value="1"/>
</dbReference>
<dbReference type="Gene3D" id="3.40.50.12470">
    <property type="match status" value="1"/>
</dbReference>
<dbReference type="Gene3D" id="3.40.50.970">
    <property type="match status" value="1"/>
</dbReference>
<dbReference type="Gene3D" id="3.40.50.11610">
    <property type="entry name" value="Multifunctional 2-oxoglutarate metabolism enzyme, C-terminal domain"/>
    <property type="match status" value="1"/>
</dbReference>
<dbReference type="Gene3D" id="1.10.287.1150">
    <property type="entry name" value="TPP helical domain"/>
    <property type="match status" value="1"/>
</dbReference>
<dbReference type="HAMAP" id="MF_01169">
    <property type="entry name" value="SucA_OdhA"/>
    <property type="match status" value="1"/>
</dbReference>
<dbReference type="InterPro" id="IPR032106">
    <property type="entry name" value="2-oxogl_dehyd_N"/>
</dbReference>
<dbReference type="InterPro" id="IPR011603">
    <property type="entry name" value="2oxoglutarate_DH_E1"/>
</dbReference>
<dbReference type="InterPro" id="IPR023784">
    <property type="entry name" value="2oxoglutarate_DH_E1_bac"/>
</dbReference>
<dbReference type="InterPro" id="IPR001017">
    <property type="entry name" value="DH_E1"/>
</dbReference>
<dbReference type="InterPro" id="IPR042179">
    <property type="entry name" value="KGD_C_sf"/>
</dbReference>
<dbReference type="InterPro" id="IPR031717">
    <property type="entry name" value="ODO-1/KGD_C"/>
</dbReference>
<dbReference type="InterPro" id="IPR029061">
    <property type="entry name" value="THDP-binding"/>
</dbReference>
<dbReference type="InterPro" id="IPR005475">
    <property type="entry name" value="Transketolase-like_Pyr-bd"/>
</dbReference>
<dbReference type="NCBIfam" id="TIGR00239">
    <property type="entry name" value="2oxo_dh_E1"/>
    <property type="match status" value="1"/>
</dbReference>
<dbReference type="NCBIfam" id="NF006914">
    <property type="entry name" value="PRK09404.1"/>
    <property type="match status" value="1"/>
</dbReference>
<dbReference type="NCBIfam" id="NF008907">
    <property type="entry name" value="PRK12270.1"/>
    <property type="match status" value="1"/>
</dbReference>
<dbReference type="PANTHER" id="PTHR23152:SF4">
    <property type="entry name" value="2-OXOADIPATE DEHYDROGENASE COMPLEX COMPONENT E1"/>
    <property type="match status" value="1"/>
</dbReference>
<dbReference type="PANTHER" id="PTHR23152">
    <property type="entry name" value="2-OXOGLUTARATE DEHYDROGENASE"/>
    <property type="match status" value="1"/>
</dbReference>
<dbReference type="Pfam" id="PF16078">
    <property type="entry name" value="2-oxogl_dehyd_N"/>
    <property type="match status" value="1"/>
</dbReference>
<dbReference type="Pfam" id="PF00676">
    <property type="entry name" value="E1_dh"/>
    <property type="match status" value="1"/>
</dbReference>
<dbReference type="Pfam" id="PF16870">
    <property type="entry name" value="OxoGdeHyase_C"/>
    <property type="match status" value="1"/>
</dbReference>
<dbReference type="Pfam" id="PF02779">
    <property type="entry name" value="Transket_pyr"/>
    <property type="match status" value="1"/>
</dbReference>
<dbReference type="PIRSF" id="PIRSF000157">
    <property type="entry name" value="Oxoglu_dh_E1"/>
    <property type="match status" value="1"/>
</dbReference>
<dbReference type="SMART" id="SM00861">
    <property type="entry name" value="Transket_pyr"/>
    <property type="match status" value="1"/>
</dbReference>
<dbReference type="SUPFAM" id="SSF52518">
    <property type="entry name" value="Thiamin diphosphate-binding fold (THDP-binding)"/>
    <property type="match status" value="2"/>
</dbReference>
<accession>Q72PJ7</accession>
<name>ODO1_LEPIC</name>
<feature type="chain" id="PRO_0000162173" description="2-oxoglutarate dehydrogenase E1 component">
    <location>
        <begin position="1"/>
        <end position="920"/>
    </location>
</feature>
<gene>
    <name evidence="1" type="primary">sucA</name>
    <name evidence="1" type="synonym">odhA</name>
    <name type="ordered locus">LIC_12474</name>
</gene>
<comment type="function">
    <text evidence="1">E1 component of the 2-oxoglutarate dehydrogenase (OGDH) complex which catalyzes the decarboxylation of 2-oxoglutarate, the first step in the conversion of 2-oxoglutarate to succinyl-CoA and CO(2).</text>
</comment>
<comment type="catalytic activity">
    <reaction evidence="1">
        <text>N(6)-[(R)-lipoyl]-L-lysyl-[protein] + 2-oxoglutarate + H(+) = N(6)-[(R)-S(8)-succinyldihydrolipoyl]-L-lysyl-[protein] + CO2</text>
        <dbReference type="Rhea" id="RHEA:12188"/>
        <dbReference type="Rhea" id="RHEA-COMP:10474"/>
        <dbReference type="Rhea" id="RHEA-COMP:20092"/>
        <dbReference type="ChEBI" id="CHEBI:15378"/>
        <dbReference type="ChEBI" id="CHEBI:16526"/>
        <dbReference type="ChEBI" id="CHEBI:16810"/>
        <dbReference type="ChEBI" id="CHEBI:83099"/>
        <dbReference type="ChEBI" id="CHEBI:83120"/>
        <dbReference type="EC" id="1.2.4.2"/>
    </reaction>
</comment>
<comment type="cofactor">
    <cofactor evidence="1">
        <name>thiamine diphosphate</name>
        <dbReference type="ChEBI" id="CHEBI:58937"/>
    </cofactor>
</comment>
<comment type="subunit">
    <text evidence="1">Homodimer. Part of the 2-oxoglutarate dehydrogenase (OGDH) complex composed of E1 (2-oxoglutarate dehydrogenase), E2 (dihydrolipoamide succinyltransferase) and E3 (dihydrolipoamide dehydrogenase); the complex contains multiple copies of the three enzymatic components (E1, E2 and E3).</text>
</comment>
<comment type="similarity">
    <text evidence="1">Belongs to the alpha-ketoglutarate dehydrogenase family.</text>
</comment>
<keyword id="KW-0324">Glycolysis</keyword>
<keyword id="KW-0560">Oxidoreductase</keyword>
<keyword id="KW-0786">Thiamine pyrophosphate</keyword>
<evidence type="ECO:0000255" key="1">
    <source>
        <dbReference type="HAMAP-Rule" id="MF_01169"/>
    </source>
</evidence>